<evidence type="ECO:0000255" key="1">
    <source>
        <dbReference type="HAMAP-Rule" id="MF_00230"/>
    </source>
</evidence>
<evidence type="ECO:0007829" key="2">
    <source>
        <dbReference type="PDB" id="6B5F"/>
    </source>
</evidence>
<keyword id="KW-0002">3D-structure</keyword>
<keyword id="KW-0169">Cobalamin biosynthesis</keyword>
<keyword id="KW-0328">Glycosyltransferase</keyword>
<keyword id="KW-0808">Transferase</keyword>
<name>COBT_YERE8</name>
<organism>
    <name type="scientific">Yersinia enterocolitica serotype O:8 / biotype 1B (strain NCTC 13174 / 8081)</name>
    <dbReference type="NCBI Taxonomy" id="393305"/>
    <lineage>
        <taxon>Bacteria</taxon>
        <taxon>Pseudomonadati</taxon>
        <taxon>Pseudomonadota</taxon>
        <taxon>Gammaproteobacteria</taxon>
        <taxon>Enterobacterales</taxon>
        <taxon>Yersiniaceae</taxon>
        <taxon>Yersinia</taxon>
    </lineage>
</organism>
<feature type="chain" id="PRO_1000021643" description="Nicotinate-nucleotide--dimethylbenzimidazole phosphoribosyltransferase">
    <location>
        <begin position="1"/>
        <end position="352"/>
    </location>
</feature>
<feature type="active site" description="Proton acceptor" evidence="1">
    <location>
        <position position="316"/>
    </location>
</feature>
<feature type="helix" evidence="2">
    <location>
        <begin position="4"/>
        <end position="9"/>
    </location>
</feature>
<feature type="helix" evidence="2">
    <location>
        <begin position="16"/>
        <end position="27"/>
    </location>
</feature>
<feature type="strand" evidence="2">
    <location>
        <begin position="29"/>
        <end position="32"/>
    </location>
</feature>
<feature type="turn" evidence="2">
    <location>
        <begin position="33"/>
        <end position="36"/>
    </location>
</feature>
<feature type="helix" evidence="2">
    <location>
        <begin position="37"/>
        <end position="47"/>
    </location>
</feature>
<feature type="strand" evidence="2">
    <location>
        <begin position="60"/>
        <end position="67"/>
    </location>
</feature>
<feature type="helix" evidence="2">
    <location>
        <begin position="70"/>
        <end position="74"/>
    </location>
</feature>
<feature type="helix" evidence="2">
    <location>
        <begin position="83"/>
        <end position="93"/>
    </location>
</feature>
<feature type="helix" evidence="2">
    <location>
        <begin position="97"/>
        <end position="104"/>
    </location>
</feature>
<feature type="strand" evidence="2">
    <location>
        <begin position="107"/>
        <end position="115"/>
    </location>
</feature>
<feature type="strand" evidence="2">
    <location>
        <begin position="117"/>
        <end position="119"/>
    </location>
</feature>
<feature type="strand" evidence="2">
    <location>
        <begin position="124"/>
        <end position="126"/>
    </location>
</feature>
<feature type="strand" evidence="2">
    <location>
        <begin position="130"/>
        <end position="132"/>
    </location>
</feature>
<feature type="turn" evidence="2">
    <location>
        <begin position="136"/>
        <end position="138"/>
    </location>
</feature>
<feature type="helix" evidence="2">
    <location>
        <begin position="144"/>
        <end position="163"/>
    </location>
</feature>
<feature type="strand" evidence="2">
    <location>
        <begin position="168"/>
        <end position="174"/>
    </location>
</feature>
<feature type="turn" evidence="2">
    <location>
        <begin position="176"/>
        <end position="178"/>
    </location>
</feature>
<feature type="helix" evidence="2">
    <location>
        <begin position="179"/>
        <end position="190"/>
    </location>
</feature>
<feature type="helix" evidence="2">
    <location>
        <begin position="194"/>
        <end position="197"/>
    </location>
</feature>
<feature type="turn" evidence="2">
    <location>
        <begin position="201"/>
        <end position="203"/>
    </location>
</feature>
<feature type="helix" evidence="2">
    <location>
        <begin position="206"/>
        <end position="208"/>
    </location>
</feature>
<feature type="helix" evidence="2">
    <location>
        <begin position="209"/>
        <end position="223"/>
    </location>
</feature>
<feature type="helix" evidence="2">
    <location>
        <begin position="230"/>
        <end position="237"/>
    </location>
</feature>
<feature type="helix" evidence="2">
    <location>
        <begin position="240"/>
        <end position="255"/>
    </location>
</feature>
<feature type="helix" evidence="2">
    <location>
        <begin position="264"/>
        <end position="276"/>
    </location>
</feature>
<feature type="helix" evidence="2">
    <location>
        <begin position="278"/>
        <end position="283"/>
    </location>
</feature>
<feature type="helix" evidence="2">
    <location>
        <begin position="295"/>
        <end position="302"/>
    </location>
</feature>
<feature type="helix" evidence="2">
    <location>
        <begin position="318"/>
        <end position="336"/>
    </location>
</feature>
<accession>A1JTP8</accession>
<gene>
    <name evidence="1" type="primary">cobT</name>
    <name type="ordered locus">YE2707</name>
</gene>
<sequence>MQTLSSILRTIAPLDSKAMARATTRLDGLLKPQGSLGRLEQLAIQLAGMRGLYGHQVDRKQIIVMAADHGVYDEGVAISPRVVTMVQALNMVRGVTGVCVLAANAGAEVKIVDVGIDSDTLPGVIDMKVARGSGNIARGAAMTRQQAEDLLIASATLTLQQAAGGVKVFGVGELGMANTTPAAAMVSVFTDSDPELAVGIGANFPSEQLHHKVAVVRRAIETNQPDASDGIDVLAKVGGFDLVGMTGVMLGAAAAGLPVVLDGFLSYASALAACRIEAKVRDYLIPSHLSAEKGAVIALNHLQLEPYLQMGMRLGEGSGAALAMHLVDAACAMYNNMGSLAESNIELPGCVN</sequence>
<dbReference type="EC" id="2.4.2.21" evidence="1"/>
<dbReference type="EMBL" id="AM286415">
    <property type="protein sequence ID" value="CAL12740.1"/>
    <property type="molecule type" value="Genomic_DNA"/>
</dbReference>
<dbReference type="RefSeq" id="WP_005168498.1">
    <property type="nucleotide sequence ID" value="NC_008800.1"/>
</dbReference>
<dbReference type="RefSeq" id="YP_001006897.1">
    <property type="nucleotide sequence ID" value="NC_008800.1"/>
</dbReference>
<dbReference type="PDB" id="6B5F">
    <property type="method" value="X-ray"/>
    <property type="resolution" value="1.95 A"/>
    <property type="chains" value="A/B=1-352"/>
</dbReference>
<dbReference type="PDBsum" id="6B5F"/>
<dbReference type="SMR" id="A1JTP8"/>
<dbReference type="KEGG" id="yen:YE2707"/>
<dbReference type="PATRIC" id="fig|393305.7.peg.2876"/>
<dbReference type="eggNOG" id="COG2038">
    <property type="taxonomic scope" value="Bacteria"/>
</dbReference>
<dbReference type="HOGENOM" id="CLU_002982_0_0_6"/>
<dbReference type="OrthoDB" id="9781491at2"/>
<dbReference type="UniPathway" id="UPA00061">
    <property type="reaction ID" value="UER00516"/>
</dbReference>
<dbReference type="Proteomes" id="UP000000642">
    <property type="component" value="Chromosome"/>
</dbReference>
<dbReference type="GO" id="GO:0008939">
    <property type="term" value="F:nicotinate-nucleotide-dimethylbenzimidazole phosphoribosyltransferase activity"/>
    <property type="evidence" value="ECO:0007669"/>
    <property type="project" value="UniProtKB-UniRule"/>
</dbReference>
<dbReference type="GO" id="GO:0009236">
    <property type="term" value="P:cobalamin biosynthetic process"/>
    <property type="evidence" value="ECO:0007669"/>
    <property type="project" value="UniProtKB-KW"/>
</dbReference>
<dbReference type="CDD" id="cd02439">
    <property type="entry name" value="DMB-PRT_CobT"/>
    <property type="match status" value="1"/>
</dbReference>
<dbReference type="FunFam" id="3.40.50.10210:FF:000001">
    <property type="entry name" value="Nicotinate-nucleotide--dimethylbenzimidazole phosphoribosyltransferase"/>
    <property type="match status" value="1"/>
</dbReference>
<dbReference type="Gene3D" id="1.10.1610.10">
    <property type="match status" value="1"/>
</dbReference>
<dbReference type="Gene3D" id="3.40.50.10210">
    <property type="match status" value="1"/>
</dbReference>
<dbReference type="HAMAP" id="MF_00230">
    <property type="entry name" value="CobT"/>
    <property type="match status" value="1"/>
</dbReference>
<dbReference type="InterPro" id="IPR003200">
    <property type="entry name" value="Nict_dMeBzImd_PRibTrfase"/>
</dbReference>
<dbReference type="InterPro" id="IPR017846">
    <property type="entry name" value="Nict_dMeBzImd_PRibTrfase_bact"/>
</dbReference>
<dbReference type="InterPro" id="IPR023195">
    <property type="entry name" value="Nict_dMeBzImd_PRibTrfase_N"/>
</dbReference>
<dbReference type="InterPro" id="IPR036087">
    <property type="entry name" value="Nict_dMeBzImd_PRibTrfase_sf"/>
</dbReference>
<dbReference type="NCBIfam" id="TIGR03160">
    <property type="entry name" value="cobT_DBIPRT"/>
    <property type="match status" value="1"/>
</dbReference>
<dbReference type="NCBIfam" id="NF000996">
    <property type="entry name" value="PRK00105.1"/>
    <property type="match status" value="1"/>
</dbReference>
<dbReference type="PANTHER" id="PTHR43463">
    <property type="entry name" value="NICOTINATE-NUCLEOTIDE--DIMETHYLBENZIMIDAZOLE PHOSPHORIBOSYLTRANSFERASE"/>
    <property type="match status" value="1"/>
</dbReference>
<dbReference type="PANTHER" id="PTHR43463:SF1">
    <property type="entry name" value="NICOTINATE-NUCLEOTIDE--DIMETHYLBENZIMIDAZOLE PHOSPHORIBOSYLTRANSFERASE"/>
    <property type="match status" value="1"/>
</dbReference>
<dbReference type="Pfam" id="PF02277">
    <property type="entry name" value="DBI_PRT"/>
    <property type="match status" value="1"/>
</dbReference>
<dbReference type="SUPFAM" id="SSF52733">
    <property type="entry name" value="Nicotinate mononucleotide:5,6-dimethylbenzimidazole phosphoribosyltransferase (CobT)"/>
    <property type="match status" value="1"/>
</dbReference>
<protein>
    <recommendedName>
        <fullName evidence="1">Nicotinate-nucleotide--dimethylbenzimidazole phosphoribosyltransferase</fullName>
        <shortName evidence="1">NN:DBI PRT</shortName>
        <ecNumber evidence="1">2.4.2.21</ecNumber>
    </recommendedName>
    <alternativeName>
        <fullName evidence="1">N(1)-alpha-phosphoribosyltransferase</fullName>
    </alternativeName>
</protein>
<comment type="function">
    <text evidence="1">Catalyzes the synthesis of alpha-ribazole-5'-phosphate from nicotinate mononucleotide (NAMN) and 5,6-dimethylbenzimidazole (DMB).</text>
</comment>
<comment type="catalytic activity">
    <reaction evidence="1">
        <text>5,6-dimethylbenzimidazole + nicotinate beta-D-ribonucleotide = alpha-ribazole 5'-phosphate + nicotinate + H(+)</text>
        <dbReference type="Rhea" id="RHEA:11196"/>
        <dbReference type="ChEBI" id="CHEBI:15378"/>
        <dbReference type="ChEBI" id="CHEBI:15890"/>
        <dbReference type="ChEBI" id="CHEBI:32544"/>
        <dbReference type="ChEBI" id="CHEBI:57502"/>
        <dbReference type="ChEBI" id="CHEBI:57918"/>
        <dbReference type="EC" id="2.4.2.21"/>
    </reaction>
</comment>
<comment type="pathway">
    <text evidence="1">Nucleoside biosynthesis; alpha-ribazole biosynthesis; alpha-ribazole from 5,6-dimethylbenzimidazole: step 1/2.</text>
</comment>
<comment type="similarity">
    <text evidence="1">Belongs to the CobT family.</text>
</comment>
<proteinExistence type="evidence at protein level"/>
<reference key="1">
    <citation type="journal article" date="2006" name="PLoS Genet.">
        <title>The complete genome sequence and comparative genome analysis of the high pathogenicity Yersinia enterocolitica strain 8081.</title>
        <authorList>
            <person name="Thomson N.R."/>
            <person name="Howard S."/>
            <person name="Wren B.W."/>
            <person name="Holden M.T.G."/>
            <person name="Crossman L."/>
            <person name="Challis G.L."/>
            <person name="Churcher C."/>
            <person name="Mungall K."/>
            <person name="Brooks K."/>
            <person name="Chillingworth T."/>
            <person name="Feltwell T."/>
            <person name="Abdellah Z."/>
            <person name="Hauser H."/>
            <person name="Jagels K."/>
            <person name="Maddison M."/>
            <person name="Moule S."/>
            <person name="Sanders M."/>
            <person name="Whitehead S."/>
            <person name="Quail M.A."/>
            <person name="Dougan G."/>
            <person name="Parkhill J."/>
            <person name="Prentice M.B."/>
        </authorList>
    </citation>
    <scope>NUCLEOTIDE SEQUENCE [LARGE SCALE GENOMIC DNA]</scope>
    <source>
        <strain>NCTC 13174 / 8081</strain>
    </source>
</reference>